<organism>
    <name type="scientific">Raoultella planticola</name>
    <name type="common">Klebsiella planticola</name>
    <dbReference type="NCBI Taxonomy" id="575"/>
    <lineage>
        <taxon>Bacteria</taxon>
        <taxon>Pseudomonadati</taxon>
        <taxon>Pseudomonadota</taxon>
        <taxon>Gammaproteobacteria</taxon>
        <taxon>Enterobacterales</taxon>
        <taxon>Enterobacteriaceae</taxon>
        <taxon>Klebsiella/Raoultella group</taxon>
        <taxon>Raoultella</taxon>
    </lineage>
</organism>
<proteinExistence type="inferred from homology"/>
<name>6PGD_RAOPL</name>
<protein>
    <recommendedName>
        <fullName>6-phosphogluconate dehydrogenase, decarboxylating</fullName>
        <ecNumber>1.1.1.44</ecNumber>
    </recommendedName>
</protein>
<dbReference type="EC" id="1.1.1.44"/>
<dbReference type="EMBL" id="U14464">
    <property type="protein sequence ID" value="AAC43816.1"/>
    <property type="molecule type" value="Genomic_DNA"/>
</dbReference>
<dbReference type="SMR" id="P41575"/>
<dbReference type="UniPathway" id="UPA00115">
    <property type="reaction ID" value="UER00410"/>
</dbReference>
<dbReference type="GO" id="GO:0050661">
    <property type="term" value="F:NADP binding"/>
    <property type="evidence" value="ECO:0007669"/>
    <property type="project" value="InterPro"/>
</dbReference>
<dbReference type="GO" id="GO:0004616">
    <property type="term" value="F:phosphogluconate dehydrogenase (decarboxylating) activity"/>
    <property type="evidence" value="ECO:0007669"/>
    <property type="project" value="UniProtKB-EC"/>
</dbReference>
<dbReference type="GO" id="GO:0019521">
    <property type="term" value="P:D-gluconate metabolic process"/>
    <property type="evidence" value="ECO:0007669"/>
    <property type="project" value="UniProtKB-KW"/>
</dbReference>
<dbReference type="GO" id="GO:0016054">
    <property type="term" value="P:organic acid catabolic process"/>
    <property type="evidence" value="ECO:0007669"/>
    <property type="project" value="UniProtKB-ARBA"/>
</dbReference>
<dbReference type="GO" id="GO:0006098">
    <property type="term" value="P:pentose-phosphate shunt"/>
    <property type="evidence" value="ECO:0007669"/>
    <property type="project" value="UniProtKB-UniPathway"/>
</dbReference>
<dbReference type="FunFam" id="1.10.1040.10:FF:000002">
    <property type="entry name" value="6-phosphogluconate dehydrogenase, decarboxylating"/>
    <property type="match status" value="1"/>
</dbReference>
<dbReference type="FunFam" id="3.40.50.720:FF:000007">
    <property type="entry name" value="6-phosphogluconate dehydrogenase, decarboxylating"/>
    <property type="match status" value="1"/>
</dbReference>
<dbReference type="Gene3D" id="1.20.5.320">
    <property type="entry name" value="6-Phosphogluconate Dehydrogenase, domain 3"/>
    <property type="match status" value="1"/>
</dbReference>
<dbReference type="Gene3D" id="1.10.1040.10">
    <property type="entry name" value="N-(1-d-carboxylethyl)-l-norvaline Dehydrogenase, domain 2"/>
    <property type="match status" value="1"/>
</dbReference>
<dbReference type="Gene3D" id="3.40.50.720">
    <property type="entry name" value="NAD(P)-binding Rossmann-like Domain"/>
    <property type="match status" value="1"/>
</dbReference>
<dbReference type="InterPro" id="IPR008927">
    <property type="entry name" value="6-PGluconate_DH-like_C_sf"/>
</dbReference>
<dbReference type="InterPro" id="IPR013328">
    <property type="entry name" value="6PGD_dom2"/>
</dbReference>
<dbReference type="InterPro" id="IPR006114">
    <property type="entry name" value="6PGDH_C"/>
</dbReference>
<dbReference type="InterPro" id="IPR006113">
    <property type="entry name" value="6PGDH_Gnd/GntZ"/>
</dbReference>
<dbReference type="InterPro" id="IPR006115">
    <property type="entry name" value="6PGDH_NADP-bd"/>
</dbReference>
<dbReference type="InterPro" id="IPR006184">
    <property type="entry name" value="6PGdom_BS"/>
</dbReference>
<dbReference type="InterPro" id="IPR036291">
    <property type="entry name" value="NAD(P)-bd_dom_sf"/>
</dbReference>
<dbReference type="InterPro" id="IPR006183">
    <property type="entry name" value="Pgluconate_DH"/>
</dbReference>
<dbReference type="NCBIfam" id="TIGR00873">
    <property type="entry name" value="gnd"/>
    <property type="match status" value="1"/>
</dbReference>
<dbReference type="NCBIfam" id="NF006765">
    <property type="entry name" value="PRK09287.1"/>
    <property type="match status" value="1"/>
</dbReference>
<dbReference type="PANTHER" id="PTHR11811">
    <property type="entry name" value="6-PHOSPHOGLUCONATE DEHYDROGENASE"/>
    <property type="match status" value="1"/>
</dbReference>
<dbReference type="Pfam" id="PF00393">
    <property type="entry name" value="6PGD"/>
    <property type="match status" value="1"/>
</dbReference>
<dbReference type="Pfam" id="PF03446">
    <property type="entry name" value="NAD_binding_2"/>
    <property type="match status" value="1"/>
</dbReference>
<dbReference type="PIRSF" id="PIRSF000109">
    <property type="entry name" value="6PGD"/>
    <property type="match status" value="1"/>
</dbReference>
<dbReference type="PRINTS" id="PR00076">
    <property type="entry name" value="6PGDHDRGNASE"/>
</dbReference>
<dbReference type="SMART" id="SM01350">
    <property type="entry name" value="6PGD"/>
    <property type="match status" value="1"/>
</dbReference>
<dbReference type="SUPFAM" id="SSF48179">
    <property type="entry name" value="6-phosphogluconate dehydrogenase C-terminal domain-like"/>
    <property type="match status" value="1"/>
</dbReference>
<dbReference type="SUPFAM" id="SSF51735">
    <property type="entry name" value="NAD(P)-binding Rossmann-fold domains"/>
    <property type="match status" value="1"/>
</dbReference>
<dbReference type="PROSITE" id="PS00461">
    <property type="entry name" value="6PGD"/>
    <property type="match status" value="1"/>
</dbReference>
<evidence type="ECO:0000250" key="1"/>
<evidence type="ECO:0000305" key="2"/>
<comment type="function">
    <text evidence="1">Catalyzes the oxidative decarboxylation of 6-phosphogluconate to ribulose 5-phosphate and CO(2), with concomitant reduction of NADP to NADPH.</text>
</comment>
<comment type="catalytic activity">
    <reaction>
        <text>6-phospho-D-gluconate + NADP(+) = D-ribulose 5-phosphate + CO2 + NADPH</text>
        <dbReference type="Rhea" id="RHEA:10116"/>
        <dbReference type="ChEBI" id="CHEBI:16526"/>
        <dbReference type="ChEBI" id="CHEBI:57783"/>
        <dbReference type="ChEBI" id="CHEBI:58121"/>
        <dbReference type="ChEBI" id="CHEBI:58349"/>
        <dbReference type="ChEBI" id="CHEBI:58759"/>
        <dbReference type="EC" id="1.1.1.44"/>
    </reaction>
</comment>
<comment type="pathway">
    <text>Carbohydrate degradation; pentose phosphate pathway; D-ribulose 5-phosphate from D-glucose 6-phosphate (oxidative stage): step 3/3.</text>
</comment>
<comment type="subunit">
    <text evidence="1">Homodimer.</text>
</comment>
<comment type="similarity">
    <text evidence="2">Belongs to the 6-phosphogluconate dehydrogenase family.</text>
</comment>
<reference key="1">
    <citation type="journal article" date="1994" name="Proc. Natl. Acad. Sci. U.S.A.">
        <title>Intergeneric transfer and recombination of the 6-phosphogluconate dehydrogenase gene (gnd) in enteric bacteria.</title>
        <authorList>
            <person name="Nelson K."/>
            <person name="Selander R.K."/>
        </authorList>
    </citation>
    <scope>NUCLEOTIDE SEQUENCE [GENOMIC DNA]</scope>
    <source>
        <strain>ATCC 33531 / DSM 3069 / NBRC 14939 / NCIMB 11885 / NCTC 12998 / JCM 7251 / V-236</strain>
    </source>
</reference>
<keyword id="KW-0311">Gluconate utilization</keyword>
<keyword id="KW-0521">NADP</keyword>
<keyword id="KW-0560">Oxidoreductase</keyword>
<keyword id="KW-0570">Pentose shunt</keyword>
<sequence>AVMGRNLALNIESRGYTVSVFNRSREKTEEVIAENPGKKLVPHYTVKEFVESLETPRRILLMVKAGAGTDSAIDSLKPYLNKGDIIIDGGNTFFQDTIRRNRELSAEGFNFIGTGVSGGEEGALKGPSIMPGGQKEAYELVAPILEQIAARAEDGEPCVAYIGADGAGHYVKMVHNGIEYGDMQLIAEAYALLKGGLALSNEELATTFTKWNEGELSSYLIDITKDIFTKKDEEGKYLVDVILDEAANKGTGKWTSQSSLDLGEPLSLITESVFARYISSLKDQRVAASKVLTGPKAQPAGDKAEFVEKVRRALYLGKIVSYAQGFSQLRAASNEYNWDLNYGEIAKIFRAGCIIRAQFLQKITDAYEQNAGIANLLLAPYFKQIADEYQQALRDVVAYAVQNGIPVPTFSAAIAYYDSYRSAVLPANLIQAQRDYFGAHTYKRT</sequence>
<gene>
    <name type="primary">gnd</name>
</gene>
<accession>P41575</accession>
<feature type="chain" id="PRO_0000090042" description="6-phosphogluconate dehydrogenase, decarboxylating">
    <location>
        <begin position="1" status="less than"/>
        <end position="445" status="greater than"/>
    </location>
</feature>
<feature type="active site" description="Proton acceptor" evidence="1">
    <location>
        <position position="172"/>
    </location>
</feature>
<feature type="active site" description="Proton donor" evidence="1">
    <location>
        <position position="179"/>
    </location>
</feature>
<feature type="binding site" evidence="1">
    <location>
        <begin position="1"/>
        <end position="4"/>
    </location>
    <ligand>
        <name>NADP(+)</name>
        <dbReference type="ChEBI" id="CHEBI:58349"/>
    </ligand>
</feature>
<feature type="binding site" evidence="1">
    <location>
        <begin position="22"/>
        <end position="24"/>
    </location>
    <ligand>
        <name>NADP(+)</name>
        <dbReference type="ChEBI" id="CHEBI:58349"/>
    </ligand>
</feature>
<feature type="binding site" evidence="1">
    <location>
        <begin position="63"/>
        <end position="65"/>
    </location>
    <ligand>
        <name>NADP(+)</name>
        <dbReference type="ChEBI" id="CHEBI:58349"/>
    </ligand>
</feature>
<feature type="binding site" evidence="1">
    <location>
        <position position="91"/>
    </location>
    <ligand>
        <name>NADP(+)</name>
        <dbReference type="ChEBI" id="CHEBI:58349"/>
    </ligand>
</feature>
<feature type="binding site" description="in other chain" evidence="1">
    <location>
        <position position="91"/>
    </location>
    <ligand>
        <name>substrate</name>
        <note>ligand shared between dimeric partners</note>
    </ligand>
</feature>
<feature type="binding site" description="in other chain" evidence="1">
    <location>
        <begin position="117"/>
        <end position="119"/>
    </location>
    <ligand>
        <name>substrate</name>
        <note>ligand shared between dimeric partners</note>
    </ligand>
</feature>
<feature type="binding site" description="in other chain" evidence="1">
    <location>
        <begin position="175"/>
        <end position="176"/>
    </location>
    <ligand>
        <name>substrate</name>
        <note>ligand shared between dimeric partners</note>
    </ligand>
</feature>
<feature type="binding site" description="in other chain" evidence="1">
    <location>
        <position position="180"/>
    </location>
    <ligand>
        <name>substrate</name>
        <note>ligand shared between dimeric partners</note>
    </ligand>
</feature>
<feature type="binding site" description="in other chain" evidence="1">
    <location>
        <position position="249"/>
    </location>
    <ligand>
        <name>substrate</name>
        <note>ligand shared between dimeric partners</note>
    </ligand>
</feature>
<feature type="binding site" description="in other chain" evidence="1">
    <location>
        <position position="276"/>
    </location>
    <ligand>
        <name>substrate</name>
        <note>ligand shared between dimeric partners</note>
    </ligand>
</feature>
<feature type="binding site" evidence="1">
    <location>
        <position position="434"/>
    </location>
    <ligand>
        <name>substrate</name>
        <note>ligand shared between dimeric partners</note>
    </ligand>
</feature>
<feature type="binding site" evidence="1">
    <location>
        <position position="440"/>
    </location>
    <ligand>
        <name>substrate</name>
        <note>ligand shared between dimeric partners</note>
    </ligand>
</feature>
<feature type="non-terminal residue">
    <location>
        <position position="1"/>
    </location>
</feature>
<feature type="non-terminal residue">
    <location>
        <position position="445"/>
    </location>
</feature>